<gene>
    <name evidence="1" type="primary">rplK</name>
    <name evidence="1" type="synonym">rpl11</name>
    <name type="ordered locus">Syncc9605_2471</name>
</gene>
<evidence type="ECO:0000255" key="1">
    <source>
        <dbReference type="HAMAP-Rule" id="MF_00736"/>
    </source>
</evidence>
<evidence type="ECO:0000305" key="2"/>
<accession>Q3AGS9</accession>
<organism>
    <name type="scientific">Synechococcus sp. (strain CC9605)</name>
    <dbReference type="NCBI Taxonomy" id="110662"/>
    <lineage>
        <taxon>Bacteria</taxon>
        <taxon>Bacillati</taxon>
        <taxon>Cyanobacteriota</taxon>
        <taxon>Cyanophyceae</taxon>
        <taxon>Synechococcales</taxon>
        <taxon>Synechococcaceae</taxon>
        <taxon>Synechococcus</taxon>
    </lineage>
</organism>
<feature type="chain" id="PRO_0000258228" description="Large ribosomal subunit protein uL11">
    <location>
        <begin position="1"/>
        <end position="141"/>
    </location>
</feature>
<comment type="function">
    <text evidence="1">Forms part of the ribosomal stalk which helps the ribosome interact with GTP-bound translation factors.</text>
</comment>
<comment type="subunit">
    <text evidence="1">Part of the ribosomal stalk of the 50S ribosomal subunit. Interacts with L10 and the large rRNA to form the base of the stalk. L10 forms an elongated spine to which L12 dimers bind in a sequential fashion forming a multimeric L10(L12)X complex.</text>
</comment>
<comment type="PTM">
    <text evidence="1">One or more lysine residues are methylated.</text>
</comment>
<comment type="similarity">
    <text evidence="1">Belongs to the universal ribosomal protein uL11 family.</text>
</comment>
<keyword id="KW-0488">Methylation</keyword>
<keyword id="KW-0687">Ribonucleoprotein</keyword>
<keyword id="KW-0689">Ribosomal protein</keyword>
<keyword id="KW-0694">RNA-binding</keyword>
<keyword id="KW-0699">rRNA-binding</keyword>
<name>RL11_SYNSC</name>
<sequence>MAKKVVAVIKLALDAGKANPAPPVGPALGQHGVNIMMFCKEYNARTQDKAGYVIPVEISVFEDRSFTFITKTPPASVLITKAAKIQKGSGESAKGSVGSISRAQLEEIAKTKLPDLNCTSIESAMRIIEGTARNMGVSISD</sequence>
<proteinExistence type="inferred from homology"/>
<reference key="1">
    <citation type="submission" date="2005-07" db="EMBL/GenBank/DDBJ databases">
        <title>Complete sequence of Synechococcus sp. CC9605.</title>
        <authorList>
            <consortium name="US DOE Joint Genome Institute"/>
            <person name="Copeland A."/>
            <person name="Lucas S."/>
            <person name="Lapidus A."/>
            <person name="Barry K."/>
            <person name="Detter J.C."/>
            <person name="Glavina T."/>
            <person name="Hammon N."/>
            <person name="Israni S."/>
            <person name="Pitluck S."/>
            <person name="Schmutz J."/>
            <person name="Martinez M."/>
            <person name="Larimer F."/>
            <person name="Land M."/>
            <person name="Kyrpides N."/>
            <person name="Ivanova N."/>
            <person name="Richardson P."/>
        </authorList>
    </citation>
    <scope>NUCLEOTIDE SEQUENCE [LARGE SCALE GENOMIC DNA]</scope>
    <source>
        <strain>CC9605</strain>
    </source>
</reference>
<protein>
    <recommendedName>
        <fullName evidence="1">Large ribosomal subunit protein uL11</fullName>
    </recommendedName>
    <alternativeName>
        <fullName evidence="2">50S ribosomal protein L11</fullName>
    </alternativeName>
</protein>
<dbReference type="EMBL" id="CP000110">
    <property type="protein sequence ID" value="ABB36203.1"/>
    <property type="molecule type" value="Genomic_DNA"/>
</dbReference>
<dbReference type="RefSeq" id="WP_011365398.1">
    <property type="nucleotide sequence ID" value="NC_007516.1"/>
</dbReference>
<dbReference type="SMR" id="Q3AGS9"/>
<dbReference type="STRING" id="110662.Syncc9605_2471"/>
<dbReference type="KEGG" id="syd:Syncc9605_2471"/>
<dbReference type="eggNOG" id="COG0080">
    <property type="taxonomic scope" value="Bacteria"/>
</dbReference>
<dbReference type="HOGENOM" id="CLU_074237_2_2_3"/>
<dbReference type="OrthoDB" id="9802408at2"/>
<dbReference type="GO" id="GO:0022625">
    <property type="term" value="C:cytosolic large ribosomal subunit"/>
    <property type="evidence" value="ECO:0007669"/>
    <property type="project" value="TreeGrafter"/>
</dbReference>
<dbReference type="GO" id="GO:0070180">
    <property type="term" value="F:large ribosomal subunit rRNA binding"/>
    <property type="evidence" value="ECO:0007669"/>
    <property type="project" value="UniProtKB-UniRule"/>
</dbReference>
<dbReference type="GO" id="GO:0003735">
    <property type="term" value="F:structural constituent of ribosome"/>
    <property type="evidence" value="ECO:0007669"/>
    <property type="project" value="InterPro"/>
</dbReference>
<dbReference type="GO" id="GO:0006412">
    <property type="term" value="P:translation"/>
    <property type="evidence" value="ECO:0007669"/>
    <property type="project" value="UniProtKB-UniRule"/>
</dbReference>
<dbReference type="CDD" id="cd00349">
    <property type="entry name" value="Ribosomal_L11"/>
    <property type="match status" value="1"/>
</dbReference>
<dbReference type="FunFam" id="1.10.10.250:FF:000001">
    <property type="entry name" value="50S ribosomal protein L11"/>
    <property type="match status" value="1"/>
</dbReference>
<dbReference type="FunFam" id="3.30.1550.10:FF:000001">
    <property type="entry name" value="50S ribosomal protein L11"/>
    <property type="match status" value="1"/>
</dbReference>
<dbReference type="Gene3D" id="1.10.10.250">
    <property type="entry name" value="Ribosomal protein L11, C-terminal domain"/>
    <property type="match status" value="1"/>
</dbReference>
<dbReference type="Gene3D" id="3.30.1550.10">
    <property type="entry name" value="Ribosomal protein L11/L12, N-terminal domain"/>
    <property type="match status" value="1"/>
</dbReference>
<dbReference type="HAMAP" id="MF_00736">
    <property type="entry name" value="Ribosomal_uL11"/>
    <property type="match status" value="1"/>
</dbReference>
<dbReference type="InterPro" id="IPR000911">
    <property type="entry name" value="Ribosomal_uL11"/>
</dbReference>
<dbReference type="InterPro" id="IPR006519">
    <property type="entry name" value="Ribosomal_uL11_bac-typ"/>
</dbReference>
<dbReference type="InterPro" id="IPR020783">
    <property type="entry name" value="Ribosomal_uL11_C"/>
</dbReference>
<dbReference type="InterPro" id="IPR036769">
    <property type="entry name" value="Ribosomal_uL11_C_sf"/>
</dbReference>
<dbReference type="InterPro" id="IPR020785">
    <property type="entry name" value="Ribosomal_uL11_CS"/>
</dbReference>
<dbReference type="InterPro" id="IPR020784">
    <property type="entry name" value="Ribosomal_uL11_N"/>
</dbReference>
<dbReference type="InterPro" id="IPR036796">
    <property type="entry name" value="Ribosomal_uL11_N_sf"/>
</dbReference>
<dbReference type="NCBIfam" id="TIGR01632">
    <property type="entry name" value="L11_bact"/>
    <property type="match status" value="1"/>
</dbReference>
<dbReference type="PANTHER" id="PTHR11661">
    <property type="entry name" value="60S RIBOSOMAL PROTEIN L12"/>
    <property type="match status" value="1"/>
</dbReference>
<dbReference type="PANTHER" id="PTHR11661:SF1">
    <property type="entry name" value="LARGE RIBOSOMAL SUBUNIT PROTEIN UL11M"/>
    <property type="match status" value="1"/>
</dbReference>
<dbReference type="Pfam" id="PF00298">
    <property type="entry name" value="Ribosomal_L11"/>
    <property type="match status" value="1"/>
</dbReference>
<dbReference type="Pfam" id="PF03946">
    <property type="entry name" value="Ribosomal_L11_N"/>
    <property type="match status" value="1"/>
</dbReference>
<dbReference type="SMART" id="SM00649">
    <property type="entry name" value="RL11"/>
    <property type="match status" value="1"/>
</dbReference>
<dbReference type="SUPFAM" id="SSF54747">
    <property type="entry name" value="Ribosomal L11/L12e N-terminal domain"/>
    <property type="match status" value="1"/>
</dbReference>
<dbReference type="SUPFAM" id="SSF46906">
    <property type="entry name" value="Ribosomal protein L11, C-terminal domain"/>
    <property type="match status" value="1"/>
</dbReference>
<dbReference type="PROSITE" id="PS00359">
    <property type="entry name" value="RIBOSOMAL_L11"/>
    <property type="match status" value="1"/>
</dbReference>